<protein>
    <recommendedName>
        <fullName evidence="8">1-phosphatidylinositol 4,5-bisphosphate phosphodiesterase beta-4</fullName>
        <ecNumber evidence="9">3.1.4.11</ecNumber>
    </recommendedName>
    <alternativeName>
        <fullName>PCL-C1</fullName>
    </alternativeName>
    <alternativeName>
        <fullName>Phosphoinositide phospholipase C-beta-4</fullName>
    </alternativeName>
    <alternativeName>
        <fullName>Phospholipase C-beta-4</fullName>
        <shortName>PLC-beta-4</shortName>
    </alternativeName>
</protein>
<dbReference type="EC" id="3.1.4.11" evidence="9"/>
<dbReference type="EMBL" id="L13936">
    <property type="protein sequence ID" value="AAA30699.1"/>
    <property type="molecule type" value="mRNA"/>
</dbReference>
<dbReference type="EMBL" id="L13935">
    <property type="protein sequence ID" value="AAC37304.1"/>
    <property type="molecule type" value="mRNA"/>
</dbReference>
<dbReference type="EMBL" id="L13937">
    <property type="protein sequence ID" value="AAA30700.1"/>
    <property type="molecule type" value="mRNA"/>
</dbReference>
<dbReference type="EMBL" id="L13938">
    <property type="protein sequence ID" value="AAA30701.1"/>
    <property type="molecule type" value="mRNA"/>
</dbReference>
<dbReference type="PIR" id="B38932">
    <property type="entry name" value="B38932"/>
</dbReference>
<dbReference type="SMR" id="Q07722"/>
<dbReference type="FunCoup" id="Q07722">
    <property type="interactions" value="5"/>
</dbReference>
<dbReference type="STRING" id="9913.ENSBTAP00000017447"/>
<dbReference type="SwissLipids" id="SLP:000000950"/>
<dbReference type="PaxDb" id="9913-ENSBTAP00000017447"/>
<dbReference type="eggNOG" id="KOG1265">
    <property type="taxonomic scope" value="Eukaryota"/>
</dbReference>
<dbReference type="InParanoid" id="Q07722"/>
<dbReference type="OrthoDB" id="269822at2759"/>
<dbReference type="Proteomes" id="UP000009136">
    <property type="component" value="Unplaced"/>
</dbReference>
<dbReference type="GO" id="GO:0005886">
    <property type="term" value="C:plasma membrane"/>
    <property type="evidence" value="ECO:0000250"/>
    <property type="project" value="UniProtKB"/>
</dbReference>
<dbReference type="GO" id="GO:0005509">
    <property type="term" value="F:calcium ion binding"/>
    <property type="evidence" value="ECO:0007669"/>
    <property type="project" value="InterPro"/>
</dbReference>
<dbReference type="GO" id="GO:0004435">
    <property type="term" value="F:phosphatidylinositol-4,5-bisphosphate phospholipase C activity"/>
    <property type="evidence" value="ECO:0000318"/>
    <property type="project" value="GO_Central"/>
</dbReference>
<dbReference type="GO" id="GO:0016042">
    <property type="term" value="P:lipid catabolic process"/>
    <property type="evidence" value="ECO:0007669"/>
    <property type="project" value="UniProtKB-KW"/>
</dbReference>
<dbReference type="GO" id="GO:0046488">
    <property type="term" value="P:phosphatidylinositol metabolic process"/>
    <property type="evidence" value="ECO:0000318"/>
    <property type="project" value="GO_Central"/>
</dbReference>
<dbReference type="GO" id="GO:0048015">
    <property type="term" value="P:phosphatidylinositol-mediated signaling"/>
    <property type="evidence" value="ECO:0000318"/>
    <property type="project" value="GO_Central"/>
</dbReference>
<dbReference type="GO" id="GO:0160135">
    <property type="term" value="P:phospholipase C-activating endothelin receptor signaling pathway"/>
    <property type="evidence" value="ECO:0000250"/>
    <property type="project" value="UniProtKB"/>
</dbReference>
<dbReference type="GO" id="GO:0051209">
    <property type="term" value="P:release of sequestered calcium ion into cytosol"/>
    <property type="evidence" value="ECO:0000318"/>
    <property type="project" value="GO_Central"/>
</dbReference>
<dbReference type="CDD" id="cd00275">
    <property type="entry name" value="C2_PLC_like"/>
    <property type="match status" value="1"/>
</dbReference>
<dbReference type="CDD" id="cd16211">
    <property type="entry name" value="EFh_PI-PLCbeta4"/>
    <property type="match status" value="1"/>
</dbReference>
<dbReference type="CDD" id="cd08591">
    <property type="entry name" value="PI-PLCc_beta"/>
    <property type="match status" value="1"/>
</dbReference>
<dbReference type="FunFam" id="1.10.238.10:FF:000024">
    <property type="entry name" value="1-phosphatidylinositol 4,5-bisphosphate phosphodiesterase"/>
    <property type="match status" value="1"/>
</dbReference>
<dbReference type="FunFam" id="1.20.1230.10:FF:000002">
    <property type="entry name" value="1-phosphatidylinositol 4,5-bisphosphate phosphodiesterase"/>
    <property type="match status" value="1"/>
</dbReference>
<dbReference type="FunFam" id="2.60.40.150:FF:000008">
    <property type="entry name" value="1-phosphatidylinositol 4,5-bisphosphate phosphodiesterase"/>
    <property type="match status" value="1"/>
</dbReference>
<dbReference type="FunFam" id="3.20.20.190:FF:000005">
    <property type="entry name" value="1-phosphatidylinositol 4,5-bisphosphate phosphodiesterase"/>
    <property type="match status" value="1"/>
</dbReference>
<dbReference type="Gene3D" id="2.30.29.240">
    <property type="match status" value="1"/>
</dbReference>
<dbReference type="Gene3D" id="2.60.40.150">
    <property type="entry name" value="C2 domain"/>
    <property type="match status" value="1"/>
</dbReference>
<dbReference type="Gene3D" id="1.10.238.10">
    <property type="entry name" value="EF-hand"/>
    <property type="match status" value="1"/>
</dbReference>
<dbReference type="Gene3D" id="3.20.20.190">
    <property type="entry name" value="Phosphatidylinositol (PI) phosphodiesterase"/>
    <property type="match status" value="1"/>
</dbReference>
<dbReference type="Gene3D" id="1.20.1230.10">
    <property type="entry name" value="Phospholipase C beta, distal C-terminal domain"/>
    <property type="match status" value="1"/>
</dbReference>
<dbReference type="InterPro" id="IPR000008">
    <property type="entry name" value="C2_dom"/>
</dbReference>
<dbReference type="InterPro" id="IPR035892">
    <property type="entry name" value="C2_domain_sf"/>
</dbReference>
<dbReference type="InterPro" id="IPR011992">
    <property type="entry name" value="EF-hand-dom_pair"/>
</dbReference>
<dbReference type="InterPro" id="IPR001192">
    <property type="entry name" value="PI-PLC_fam"/>
</dbReference>
<dbReference type="InterPro" id="IPR016280">
    <property type="entry name" value="PLC-beta"/>
</dbReference>
<dbReference type="InterPro" id="IPR042531">
    <property type="entry name" value="PLC-beta_C_sf"/>
</dbReference>
<dbReference type="InterPro" id="IPR017946">
    <property type="entry name" value="PLC-like_Pdiesterase_TIM-brl"/>
</dbReference>
<dbReference type="InterPro" id="IPR053945">
    <property type="entry name" value="PLCB1-4-like_EFh"/>
</dbReference>
<dbReference type="InterPro" id="IPR000909">
    <property type="entry name" value="PLipase_C_PInositol-sp_X_dom"/>
</dbReference>
<dbReference type="InterPro" id="IPR001711">
    <property type="entry name" value="PLipase_C_Pinositol-sp_Y"/>
</dbReference>
<dbReference type="PANTHER" id="PTHR10336:SF36">
    <property type="entry name" value="1-PHOSPHATIDYLINOSITOL 4,5-BISPHOSPHATE PHOSPHODIESTERASE BETA-4"/>
    <property type="match status" value="1"/>
</dbReference>
<dbReference type="PANTHER" id="PTHR10336">
    <property type="entry name" value="PHOSPHOINOSITIDE-SPECIFIC PHOSPHOLIPASE C FAMILY PROTEIN"/>
    <property type="match status" value="1"/>
</dbReference>
<dbReference type="Pfam" id="PF00168">
    <property type="entry name" value="C2"/>
    <property type="match status" value="1"/>
</dbReference>
<dbReference type="Pfam" id="PF00388">
    <property type="entry name" value="PI-PLC-X"/>
    <property type="match status" value="1"/>
</dbReference>
<dbReference type="Pfam" id="PF00387">
    <property type="entry name" value="PI-PLC-Y"/>
    <property type="match status" value="1"/>
</dbReference>
<dbReference type="Pfam" id="PF22631">
    <property type="entry name" value="PLCB1-4-like_EFh"/>
    <property type="match status" value="1"/>
</dbReference>
<dbReference type="PIRSF" id="PIRSF000956">
    <property type="entry name" value="PLC-beta"/>
    <property type="match status" value="1"/>
</dbReference>
<dbReference type="PRINTS" id="PR00390">
    <property type="entry name" value="PHPHLIPASEC"/>
</dbReference>
<dbReference type="SMART" id="SM00239">
    <property type="entry name" value="C2"/>
    <property type="match status" value="1"/>
</dbReference>
<dbReference type="SMART" id="SM00148">
    <property type="entry name" value="PLCXc"/>
    <property type="match status" value="1"/>
</dbReference>
<dbReference type="SMART" id="SM00149">
    <property type="entry name" value="PLCYc"/>
    <property type="match status" value="1"/>
</dbReference>
<dbReference type="SUPFAM" id="SSF69989">
    <property type="entry name" value="C-terminal domain of PLC-beta"/>
    <property type="match status" value="1"/>
</dbReference>
<dbReference type="SUPFAM" id="SSF49562">
    <property type="entry name" value="C2 domain (Calcium/lipid-binding domain, CaLB)"/>
    <property type="match status" value="1"/>
</dbReference>
<dbReference type="SUPFAM" id="SSF47473">
    <property type="entry name" value="EF-hand"/>
    <property type="match status" value="1"/>
</dbReference>
<dbReference type="SUPFAM" id="SSF51695">
    <property type="entry name" value="PLC-like phosphodiesterases"/>
    <property type="match status" value="1"/>
</dbReference>
<dbReference type="PROSITE" id="PS50004">
    <property type="entry name" value="C2"/>
    <property type="match status" value="1"/>
</dbReference>
<dbReference type="PROSITE" id="PS50007">
    <property type="entry name" value="PIPLC_X_DOMAIN"/>
    <property type="match status" value="1"/>
</dbReference>
<dbReference type="PROSITE" id="PS50008">
    <property type="entry name" value="PIPLC_Y_DOMAIN"/>
    <property type="match status" value="1"/>
</dbReference>
<sequence>PVRSITRTFASGKTEKVIFQALKELGLPSGKNDEIEPAAFTYEKFYELTQKICPRTDIEDLFKKINGDKTDYLTVDQLVSFLNEHQRDPRLNEILFPFYDAKRAMQIIEMYEPDEDLKKQGLISSDGFCRYLMSDENAPVFLDRLELYQEMDHPLAHYFISSSHNTYLTGRQFGGKSSVEMYRQVLLAGCRCVELDCWDGKGEDQEPIITHGKAMCTDILFKDVIQAIKETAFVTSEYPVILSFENHCSKYQQYKMSKYCEDLFGDLLLKQALESHPLEPGRPLPSPNDLKRKILIKKQTTETEVEKKQLEALKSMMEAGESAAPVNMLEDDNEEEIESAEQEEEAHPEYKYGNELSADDLGHKEAIANSVKKASDDLEHENSKKGLVTVEDEQAWMASYKYVGATTNIHPYLSTMINYAQPVKFQGFHVAEERNIHYNMSSFNESVGLGYLKTHAIEFVNYNKRQMSRIYPKGGRVDSSNYMPQIFWNSGCQMVSLNYQTPDLAMQLNQGKFEYNGSCGYLLKPDFMRRPDRTFDPFSETPVDGVIAATCSVQVISGQFLSDKKIGTYVEVDMYGLPTDTIRKEFRTRMVMNNGLNPVYNEESFVFRKVILPDLAVLRIAVYDDNNKLIGQRILPLDGLQAGYRHISLRNEGNKPLSLPTIFCNIVLKTYVPDGFGDIVDALSDPKKFLSITEKRADQMRAMGIETSDIADVPSDTSKNDKKGKANTAKANVTPQSSSELRPTTTAALGAGLEAKKGIELIPQVRIEDLKQMKAYLKHLKKQQKELSSLKKKHAKEHSTMQKLHCTQVDKIVAQYDKEKLTHEKILEKAMKKKGGSNCLEMKKETEIKIQTLTSDHKSKVKEIVAQHTKEWSDMINTHSAEEQEIRDLLLSQQCELLRKLLISAHEQQTQQLKLSHDRESKEMRAHQAKISMENSKAISQDKSIKNKAERERRVRELNSSNTKKFLEERKRLAMKQSKEMDQLKKVQLEHLEFVEKQNEQAKEMQQMVKLEAEMDRRPATVV</sequence>
<organism>
    <name type="scientific">Bos taurus</name>
    <name type="common">Bovine</name>
    <dbReference type="NCBI Taxonomy" id="9913"/>
    <lineage>
        <taxon>Eukaryota</taxon>
        <taxon>Metazoa</taxon>
        <taxon>Chordata</taxon>
        <taxon>Craniata</taxon>
        <taxon>Vertebrata</taxon>
        <taxon>Euteleostomi</taxon>
        <taxon>Mammalia</taxon>
        <taxon>Eutheria</taxon>
        <taxon>Laurasiatheria</taxon>
        <taxon>Artiodactyla</taxon>
        <taxon>Ruminantia</taxon>
        <taxon>Pecora</taxon>
        <taxon>Bovidae</taxon>
        <taxon>Bovinae</taxon>
        <taxon>Bos</taxon>
    </lineage>
</organism>
<feature type="chain" id="PRO_0000088494" description="1-phosphatidylinositol 4,5-bisphosphate phosphodiesterase beta-4">
    <location>
        <begin position="1" status="less than"/>
        <end position="1023"/>
    </location>
</feature>
<feature type="domain" description="PI-PLC X-box" evidence="3">
    <location>
        <begin position="149"/>
        <end position="299"/>
    </location>
</feature>
<feature type="domain" description="PI-PLC Y-box" evidence="4">
    <location>
        <begin position="413"/>
        <end position="529"/>
    </location>
</feature>
<feature type="domain" description="C2" evidence="2">
    <location>
        <begin position="532"/>
        <end position="657"/>
    </location>
</feature>
<feature type="region of interest" description="Disordered" evidence="5">
    <location>
        <begin position="711"/>
        <end position="742"/>
    </location>
</feature>
<feature type="region of interest" description="Disordered" evidence="5">
    <location>
        <begin position="930"/>
        <end position="958"/>
    </location>
</feature>
<feature type="compositionally biased region" description="Polar residues" evidence="5">
    <location>
        <begin position="729"/>
        <end position="742"/>
    </location>
</feature>
<feature type="compositionally biased region" description="Polar residues" evidence="5">
    <location>
        <begin position="933"/>
        <end position="942"/>
    </location>
</feature>
<feature type="compositionally biased region" description="Basic and acidic residues" evidence="5">
    <location>
        <begin position="943"/>
        <end position="957"/>
    </location>
</feature>
<feature type="active site" evidence="3">
    <location>
        <position position="164"/>
    </location>
</feature>
<feature type="active site" evidence="3">
    <location>
        <position position="211"/>
    </location>
</feature>
<feature type="modified residue" description="Phosphothreonine" evidence="1">
    <location>
        <position position="734"/>
    </location>
</feature>
<feature type="splice variant" id="VSP_004719" description="In isoform 2A and isoform 2B." evidence="7">
    <location>
        <begin position="1" status="less than"/>
        <end position="104"/>
    </location>
</feature>
<feature type="splice variant" id="VSP_004720" description="In isoform 1A and isoform 2A." evidence="7">
    <location>
        <begin position="372"/>
        <end position="383"/>
    </location>
</feature>
<feature type="sequence conflict" description="In Ref. 2; AA sequence." evidence="8" ref="2">
    <original>E</original>
    <variation>D</variation>
    <location>
        <position position="24"/>
    </location>
</feature>
<feature type="sequence conflict" description="In Ref. 2; AA sequence." evidence="8" ref="2">
    <original>N</original>
    <variation>D</variation>
    <location>
        <position position="32"/>
    </location>
</feature>
<feature type="sequence conflict" description="In Ref. 2; AA sequence." evidence="8" ref="2">
    <original>E</original>
    <variation>L</variation>
    <location>
        <position position="36"/>
    </location>
</feature>
<feature type="sequence conflict" description="In Ref. 2; AA sequence." evidence="8" ref="2">
    <original>M</original>
    <variation>I</variation>
    <location>
        <position position="328"/>
    </location>
</feature>
<feature type="non-terminal residue">
    <location>
        <position position="1"/>
    </location>
</feature>
<keyword id="KW-0025">Alternative splicing</keyword>
<keyword id="KW-0106">Calcium</keyword>
<keyword id="KW-1003">Cell membrane</keyword>
<keyword id="KW-0903">Direct protein sequencing</keyword>
<keyword id="KW-0378">Hydrolase</keyword>
<keyword id="KW-0442">Lipid degradation</keyword>
<keyword id="KW-0443">Lipid metabolism</keyword>
<keyword id="KW-0472">Membrane</keyword>
<keyword id="KW-0597">Phosphoprotein</keyword>
<keyword id="KW-1185">Reference proteome</keyword>
<keyword id="KW-0807">Transducer</keyword>
<accession>Q07722</accession>
<accession>Q07721</accession>
<accession>Q07723</accession>
<accession>Q07724</accession>
<comment type="function">
    <text evidence="1 6">Activated phosphatidylinositol-specific phospholipase C enzymes catalyze the production of the second messenger molecules diacylglycerol (DAG) and inositol 1,4,5-trisphosphate (IP3) involved in G-protein coupled receptor signaling pathways. PLCB4 is a direct effector of the endothelin receptor signaling pathway that plays an essential role in lower jaw and middle ear structures development (By similarity).</text>
</comment>
<comment type="catalytic activity">
    <reaction evidence="9">
        <text>a 1,2-diacyl-sn-glycero-3-phospho-(1D-myo-inositol-4,5-bisphosphate) + H2O = 1D-myo-inositol 1,4,5-trisphosphate + a 1,2-diacyl-sn-glycerol + H(+)</text>
        <dbReference type="Rhea" id="RHEA:33179"/>
        <dbReference type="ChEBI" id="CHEBI:15377"/>
        <dbReference type="ChEBI" id="CHEBI:15378"/>
        <dbReference type="ChEBI" id="CHEBI:17815"/>
        <dbReference type="ChEBI" id="CHEBI:58456"/>
        <dbReference type="ChEBI" id="CHEBI:203600"/>
        <dbReference type="EC" id="3.1.4.11"/>
    </reaction>
    <physiologicalReaction direction="left-to-right" evidence="9">
        <dbReference type="Rhea" id="RHEA:33180"/>
    </physiologicalReaction>
</comment>
<comment type="catalytic activity">
    <reaction evidence="6">
        <text>a 1,2-diacyl-sn-glycero-3-phospho-(1D-myo-inositol) + H2O = 1D-myo-inositol 1-phosphate + a 1,2-diacyl-sn-glycerol + H(+)</text>
        <dbReference type="Rhea" id="RHEA:43484"/>
        <dbReference type="ChEBI" id="CHEBI:15377"/>
        <dbReference type="ChEBI" id="CHEBI:15378"/>
        <dbReference type="ChEBI" id="CHEBI:17815"/>
        <dbReference type="ChEBI" id="CHEBI:57880"/>
        <dbReference type="ChEBI" id="CHEBI:58433"/>
    </reaction>
    <physiologicalReaction direction="left-to-right" evidence="9">
        <dbReference type="Rhea" id="RHEA:43485"/>
    </physiologicalReaction>
</comment>
<comment type="cofactor">
    <cofactor>
        <name>Ca(2+)</name>
        <dbReference type="ChEBI" id="CHEBI:29108"/>
    </cofactor>
</comment>
<comment type="subcellular location">
    <subcellularLocation>
        <location evidence="1">Cell membrane</location>
    </subcellularLocation>
</comment>
<comment type="alternative products">
    <event type="alternative splicing"/>
    <isoform>
        <id>Q07722-1</id>
        <name>1B</name>
        <sequence type="displayed"/>
    </isoform>
    <isoform>
        <id>Q07722-2</id>
        <name>1A</name>
        <sequence type="described" ref="VSP_004720"/>
    </isoform>
    <isoform>
        <id>Q07722-3</id>
        <name>2A</name>
        <sequence type="described" ref="VSP_004719 VSP_004720"/>
    </isoform>
    <isoform>
        <id>Q07722-4</id>
        <name>2B</name>
        <sequence type="described" ref="VSP_004719"/>
    </isoform>
    <text>Additional isoforms seem to exist.</text>
</comment>
<comment type="tissue specificity">
    <text evidence="6">Preferentially expressed in the retina.</text>
</comment>
<comment type="PTM">
    <text>The N-terminus is blocked.</text>
</comment>
<reference key="1">
    <citation type="journal article" date="1993" name="Proc. Natl. Acad. Sci. U.S.A.">
        <title>Distinctive subtypes of bovine phospholipase C that have preferential expression in the retina and high homology to the norpA gene product of Drosophila.</title>
        <authorList>
            <person name="Ferreira P.A."/>
            <person name="Shortridge R.D."/>
            <person name="Pak W.L."/>
        </authorList>
    </citation>
    <scope>NUCLEOTIDE SEQUENCE [MRNA] (ISOFORMS 1A; 1B; 2A AND 2B)</scope>
    <source>
        <tissue>Retina</tissue>
    </source>
</reference>
<reference key="2">
    <citation type="journal article" date="1993" name="J. Biol. Chem.">
        <title>Purification of a novel phospholipase C isozyme from bovine cerebellum.</title>
        <authorList>
            <person name="Min D.S."/>
            <person name="Kim D.M."/>
            <person name="Lee Y.H."/>
            <person name="Seo J."/>
            <person name="Suh P.-G."/>
            <person name="Ryu S.H."/>
        </authorList>
    </citation>
    <scope>PROTEIN SEQUENCE OF 20-37; 259-269; 315-337; 386-391; 604-623 AND 634-639</scope>
    <source>
        <tissue>Cerebellum</tissue>
    </source>
</reference>
<reference key="3">
    <citation type="journal article" date="1993" name="J. Biol. Chem.">
        <title>Purification, molecular cloning, and sequencing of phospholipase C-beta 4.</title>
        <authorList>
            <person name="Lee C.-W."/>
            <person name="Park D.J."/>
            <person name="Lee K.-H."/>
            <person name="Kim C.G."/>
            <person name="Rhee S.G."/>
        </authorList>
    </citation>
    <scope>FUNCTION</scope>
    <scope>CATALYTIC ACTIVITY</scope>
    <scope>TISSUE SPECIFICITY</scope>
</reference>
<gene>
    <name type="primary">PLCB4</name>
</gene>
<proteinExistence type="evidence at protein level"/>
<evidence type="ECO:0000250" key="1">
    <source>
        <dbReference type="UniProtKB" id="Q15147"/>
    </source>
</evidence>
<evidence type="ECO:0000255" key="2">
    <source>
        <dbReference type="PROSITE-ProRule" id="PRU00041"/>
    </source>
</evidence>
<evidence type="ECO:0000255" key="3">
    <source>
        <dbReference type="PROSITE-ProRule" id="PRU00270"/>
    </source>
</evidence>
<evidence type="ECO:0000255" key="4">
    <source>
        <dbReference type="PROSITE-ProRule" id="PRU00271"/>
    </source>
</evidence>
<evidence type="ECO:0000256" key="5">
    <source>
        <dbReference type="SAM" id="MobiDB-lite"/>
    </source>
</evidence>
<evidence type="ECO:0000269" key="6">
    <source>
    </source>
</evidence>
<evidence type="ECO:0000303" key="7">
    <source>
    </source>
</evidence>
<evidence type="ECO:0000305" key="8"/>
<evidence type="ECO:0000305" key="9">
    <source>
    </source>
</evidence>
<name>PLCB4_BOVIN</name>